<comment type="function">
    <text evidence="1">Catalyzes the 2-thiolation of uridine at the wobble position (U34) of tRNA, leading to the formation of s(2)U34.</text>
</comment>
<comment type="catalytic activity">
    <reaction evidence="1">
        <text>S-sulfanyl-L-cysteinyl-[protein] + uridine(34) in tRNA + AH2 + ATP = 2-thiouridine(34) in tRNA + L-cysteinyl-[protein] + A + AMP + diphosphate + H(+)</text>
        <dbReference type="Rhea" id="RHEA:47032"/>
        <dbReference type="Rhea" id="RHEA-COMP:10131"/>
        <dbReference type="Rhea" id="RHEA-COMP:11726"/>
        <dbReference type="Rhea" id="RHEA-COMP:11727"/>
        <dbReference type="Rhea" id="RHEA-COMP:11728"/>
        <dbReference type="ChEBI" id="CHEBI:13193"/>
        <dbReference type="ChEBI" id="CHEBI:15378"/>
        <dbReference type="ChEBI" id="CHEBI:17499"/>
        <dbReference type="ChEBI" id="CHEBI:29950"/>
        <dbReference type="ChEBI" id="CHEBI:30616"/>
        <dbReference type="ChEBI" id="CHEBI:33019"/>
        <dbReference type="ChEBI" id="CHEBI:61963"/>
        <dbReference type="ChEBI" id="CHEBI:65315"/>
        <dbReference type="ChEBI" id="CHEBI:87170"/>
        <dbReference type="ChEBI" id="CHEBI:456215"/>
        <dbReference type="EC" id="2.8.1.13"/>
    </reaction>
</comment>
<comment type="subcellular location">
    <subcellularLocation>
        <location evidence="1">Cytoplasm</location>
    </subcellularLocation>
</comment>
<comment type="similarity">
    <text evidence="1">Belongs to the MnmA/TRMU family.</text>
</comment>
<keyword id="KW-0067">ATP-binding</keyword>
<keyword id="KW-0963">Cytoplasm</keyword>
<keyword id="KW-1015">Disulfide bond</keyword>
<keyword id="KW-0547">Nucleotide-binding</keyword>
<keyword id="KW-1185">Reference proteome</keyword>
<keyword id="KW-0694">RNA-binding</keyword>
<keyword id="KW-0808">Transferase</keyword>
<keyword id="KW-0819">tRNA processing</keyword>
<keyword id="KW-0820">tRNA-binding</keyword>
<protein>
    <recommendedName>
        <fullName evidence="1">tRNA-specific 2-thiouridylase MnmA</fullName>
        <ecNumber evidence="1">2.8.1.13</ecNumber>
    </recommendedName>
</protein>
<proteinExistence type="inferred from homology"/>
<feature type="chain" id="PRO_1000009540" description="tRNA-specific 2-thiouridylase MnmA">
    <location>
        <begin position="1"/>
        <end position="356"/>
    </location>
</feature>
<feature type="region of interest" description="Interaction with tRNA" evidence="1">
    <location>
        <begin position="143"/>
        <end position="145"/>
    </location>
</feature>
<feature type="active site" description="Nucleophile" evidence="1">
    <location>
        <position position="101"/>
    </location>
</feature>
<feature type="active site" description="Cysteine persulfide intermediate" evidence="1">
    <location>
        <position position="193"/>
    </location>
</feature>
<feature type="binding site" evidence="1">
    <location>
        <begin position="6"/>
        <end position="13"/>
    </location>
    <ligand>
        <name>ATP</name>
        <dbReference type="ChEBI" id="CHEBI:30616"/>
    </ligand>
</feature>
<feature type="binding site" evidence="1">
    <location>
        <position position="32"/>
    </location>
    <ligand>
        <name>ATP</name>
        <dbReference type="ChEBI" id="CHEBI:30616"/>
    </ligand>
</feature>
<feature type="binding site" evidence="1">
    <location>
        <position position="125"/>
    </location>
    <ligand>
        <name>ATP</name>
        <dbReference type="ChEBI" id="CHEBI:30616"/>
    </ligand>
</feature>
<feature type="site" description="Interaction with tRNA" evidence="1">
    <location>
        <position position="126"/>
    </location>
</feature>
<feature type="site" description="Interaction with tRNA" evidence="1">
    <location>
        <position position="333"/>
    </location>
</feature>
<feature type="disulfide bond" description="Alternate" evidence="1">
    <location>
        <begin position="101"/>
        <end position="193"/>
    </location>
</feature>
<dbReference type="EC" id="2.8.1.13" evidence="1"/>
<dbReference type="EMBL" id="CP000480">
    <property type="protein sequence ID" value="ABK75776.1"/>
    <property type="molecule type" value="Genomic_DNA"/>
</dbReference>
<dbReference type="EMBL" id="CP001663">
    <property type="protein sequence ID" value="AFP38768.1"/>
    <property type="molecule type" value="Genomic_DNA"/>
</dbReference>
<dbReference type="RefSeq" id="WP_003893725.1">
    <property type="nucleotide sequence ID" value="NZ_SIJM01000012.1"/>
</dbReference>
<dbReference type="RefSeq" id="YP_886701.1">
    <property type="nucleotide sequence ID" value="NC_008596.1"/>
</dbReference>
<dbReference type="SMR" id="A0QUW3"/>
<dbReference type="STRING" id="246196.MSMEG_2358"/>
<dbReference type="PaxDb" id="246196-MSMEI_2298"/>
<dbReference type="GeneID" id="93457149"/>
<dbReference type="KEGG" id="msb:LJ00_11725"/>
<dbReference type="KEGG" id="msg:MSMEI_2298"/>
<dbReference type="KEGG" id="msm:MSMEG_2358"/>
<dbReference type="PATRIC" id="fig|246196.19.peg.2324"/>
<dbReference type="eggNOG" id="COG0482">
    <property type="taxonomic scope" value="Bacteria"/>
</dbReference>
<dbReference type="OrthoDB" id="9800696at2"/>
<dbReference type="Proteomes" id="UP000000757">
    <property type="component" value="Chromosome"/>
</dbReference>
<dbReference type="Proteomes" id="UP000006158">
    <property type="component" value="Chromosome"/>
</dbReference>
<dbReference type="GO" id="GO:0005737">
    <property type="term" value="C:cytoplasm"/>
    <property type="evidence" value="ECO:0007669"/>
    <property type="project" value="UniProtKB-SubCell"/>
</dbReference>
<dbReference type="GO" id="GO:0005524">
    <property type="term" value="F:ATP binding"/>
    <property type="evidence" value="ECO:0007669"/>
    <property type="project" value="UniProtKB-KW"/>
</dbReference>
<dbReference type="GO" id="GO:0000049">
    <property type="term" value="F:tRNA binding"/>
    <property type="evidence" value="ECO:0007669"/>
    <property type="project" value="UniProtKB-KW"/>
</dbReference>
<dbReference type="GO" id="GO:0103016">
    <property type="term" value="F:tRNA-uridine 2-sulfurtransferase activity"/>
    <property type="evidence" value="ECO:0007669"/>
    <property type="project" value="UniProtKB-EC"/>
</dbReference>
<dbReference type="GO" id="GO:0002143">
    <property type="term" value="P:tRNA wobble position uridine thiolation"/>
    <property type="evidence" value="ECO:0007669"/>
    <property type="project" value="TreeGrafter"/>
</dbReference>
<dbReference type="CDD" id="cd01998">
    <property type="entry name" value="MnmA_TRMU-like"/>
    <property type="match status" value="1"/>
</dbReference>
<dbReference type="FunFam" id="2.30.30.280:FF:000001">
    <property type="entry name" value="tRNA-specific 2-thiouridylase MnmA"/>
    <property type="match status" value="1"/>
</dbReference>
<dbReference type="FunFam" id="3.40.50.620:FF:000057">
    <property type="entry name" value="tRNA-specific 2-thiouridylase MnmA"/>
    <property type="match status" value="1"/>
</dbReference>
<dbReference type="Gene3D" id="2.30.30.280">
    <property type="entry name" value="Adenine nucleotide alpha hydrolases-like domains"/>
    <property type="match status" value="1"/>
</dbReference>
<dbReference type="Gene3D" id="3.40.50.620">
    <property type="entry name" value="HUPs"/>
    <property type="match status" value="1"/>
</dbReference>
<dbReference type="Gene3D" id="2.40.30.10">
    <property type="entry name" value="Translation factors"/>
    <property type="match status" value="1"/>
</dbReference>
<dbReference type="HAMAP" id="MF_00144">
    <property type="entry name" value="tRNA_thiouridyl_MnmA"/>
    <property type="match status" value="1"/>
</dbReference>
<dbReference type="InterPro" id="IPR004506">
    <property type="entry name" value="MnmA-like"/>
</dbReference>
<dbReference type="InterPro" id="IPR046885">
    <property type="entry name" value="MnmA-like_C"/>
</dbReference>
<dbReference type="InterPro" id="IPR046884">
    <property type="entry name" value="MnmA-like_central"/>
</dbReference>
<dbReference type="InterPro" id="IPR023382">
    <property type="entry name" value="MnmA-like_central_sf"/>
</dbReference>
<dbReference type="InterPro" id="IPR014729">
    <property type="entry name" value="Rossmann-like_a/b/a_fold"/>
</dbReference>
<dbReference type="NCBIfam" id="NF001138">
    <property type="entry name" value="PRK00143.1"/>
    <property type="match status" value="1"/>
</dbReference>
<dbReference type="NCBIfam" id="TIGR00420">
    <property type="entry name" value="trmU"/>
    <property type="match status" value="1"/>
</dbReference>
<dbReference type="PANTHER" id="PTHR11933:SF5">
    <property type="entry name" value="MITOCHONDRIAL TRNA-SPECIFIC 2-THIOURIDYLASE 1"/>
    <property type="match status" value="1"/>
</dbReference>
<dbReference type="PANTHER" id="PTHR11933">
    <property type="entry name" value="TRNA 5-METHYLAMINOMETHYL-2-THIOURIDYLATE -METHYLTRANSFERASE"/>
    <property type="match status" value="1"/>
</dbReference>
<dbReference type="Pfam" id="PF03054">
    <property type="entry name" value="tRNA_Me_trans"/>
    <property type="match status" value="1"/>
</dbReference>
<dbReference type="Pfam" id="PF20258">
    <property type="entry name" value="tRNA_Me_trans_C"/>
    <property type="match status" value="1"/>
</dbReference>
<dbReference type="Pfam" id="PF20259">
    <property type="entry name" value="tRNA_Me_trans_M"/>
    <property type="match status" value="1"/>
</dbReference>
<dbReference type="SUPFAM" id="SSF52402">
    <property type="entry name" value="Adenine nucleotide alpha hydrolases-like"/>
    <property type="match status" value="1"/>
</dbReference>
<reference key="1">
    <citation type="submission" date="2006-10" db="EMBL/GenBank/DDBJ databases">
        <authorList>
            <person name="Fleischmann R.D."/>
            <person name="Dodson R.J."/>
            <person name="Haft D.H."/>
            <person name="Merkel J.S."/>
            <person name="Nelson W.C."/>
            <person name="Fraser C.M."/>
        </authorList>
    </citation>
    <scope>NUCLEOTIDE SEQUENCE [LARGE SCALE GENOMIC DNA]</scope>
    <source>
        <strain>ATCC 700084 / mc(2)155</strain>
    </source>
</reference>
<reference key="2">
    <citation type="journal article" date="2007" name="Genome Biol.">
        <title>Interrupted coding sequences in Mycobacterium smegmatis: authentic mutations or sequencing errors?</title>
        <authorList>
            <person name="Deshayes C."/>
            <person name="Perrodou E."/>
            <person name="Gallien S."/>
            <person name="Euphrasie D."/>
            <person name="Schaeffer C."/>
            <person name="Van-Dorsselaer A."/>
            <person name="Poch O."/>
            <person name="Lecompte O."/>
            <person name="Reyrat J.-M."/>
        </authorList>
    </citation>
    <scope>NUCLEOTIDE SEQUENCE [LARGE SCALE GENOMIC DNA]</scope>
    <source>
        <strain>ATCC 700084 / mc(2)155</strain>
    </source>
</reference>
<reference key="3">
    <citation type="journal article" date="2009" name="Genome Res.">
        <title>Ortho-proteogenomics: multiple proteomes investigation through orthology and a new MS-based protocol.</title>
        <authorList>
            <person name="Gallien S."/>
            <person name="Perrodou E."/>
            <person name="Carapito C."/>
            <person name="Deshayes C."/>
            <person name="Reyrat J.-M."/>
            <person name="Van Dorsselaer A."/>
            <person name="Poch O."/>
            <person name="Schaeffer C."/>
            <person name="Lecompte O."/>
        </authorList>
    </citation>
    <scope>NUCLEOTIDE SEQUENCE [LARGE SCALE GENOMIC DNA]</scope>
    <source>
        <strain>ATCC 700084 / mc(2)155</strain>
    </source>
</reference>
<sequence>MRVLVAMSGGVDSSVAAARMVDAGHDVVGVHLALSSAPGTLRTGSRGCCSKEDASDARRVADILGIPFYVWDFADRFKDDVIDDFVESYARGETPNPCVRCNERIKFSALAARALALGFDAVATGHYARLSDGRLRRAVDADKDQSYVLGVLTAEQLRHALFPIGDTPKPQIRAEAAERGLAVAEKPDSHDICFIPTGDTKAFLGARIGVRPGAVVDGSGTVLAEHDGVHGFTIGQRKGLGIAGPGADGRPRYVTAIDAETGTVRVGPAEDLEVWELTGERPVFTSGVEPGGPIECQVQVRAHGGITDTVAELRDGKLELSLRAPLRGVAPGQTMVLYRPDPDGDEVIASATITRR</sequence>
<accession>A0QUW3</accession>
<accession>I7FJ07</accession>
<gene>
    <name evidence="1" type="primary">mnmA</name>
    <name type="synonym">trmU</name>
    <name type="ordered locus">MSMEG_2358</name>
    <name type="ordered locus">MSMEI_2298</name>
</gene>
<organism>
    <name type="scientific">Mycolicibacterium smegmatis (strain ATCC 700084 / mc(2)155)</name>
    <name type="common">Mycobacterium smegmatis</name>
    <dbReference type="NCBI Taxonomy" id="246196"/>
    <lineage>
        <taxon>Bacteria</taxon>
        <taxon>Bacillati</taxon>
        <taxon>Actinomycetota</taxon>
        <taxon>Actinomycetes</taxon>
        <taxon>Mycobacteriales</taxon>
        <taxon>Mycobacteriaceae</taxon>
        <taxon>Mycolicibacterium</taxon>
    </lineage>
</organism>
<name>MNMA_MYCS2</name>
<evidence type="ECO:0000255" key="1">
    <source>
        <dbReference type="HAMAP-Rule" id="MF_00144"/>
    </source>
</evidence>